<dbReference type="EC" id="1.2.1.70" evidence="1"/>
<dbReference type="EMBL" id="AE017262">
    <property type="protein sequence ID" value="AAT04353.1"/>
    <property type="molecule type" value="Genomic_DNA"/>
</dbReference>
<dbReference type="RefSeq" id="WP_003727390.1">
    <property type="nucleotide sequence ID" value="NC_002973.6"/>
</dbReference>
<dbReference type="SMR" id="Q71ZB1"/>
<dbReference type="KEGG" id="lmf:LMOf2365_1578"/>
<dbReference type="HOGENOM" id="CLU_035113_2_2_9"/>
<dbReference type="UniPathway" id="UPA00251">
    <property type="reaction ID" value="UER00316"/>
</dbReference>
<dbReference type="GO" id="GO:0008883">
    <property type="term" value="F:glutamyl-tRNA reductase activity"/>
    <property type="evidence" value="ECO:0007669"/>
    <property type="project" value="UniProtKB-UniRule"/>
</dbReference>
<dbReference type="GO" id="GO:0050661">
    <property type="term" value="F:NADP binding"/>
    <property type="evidence" value="ECO:0007669"/>
    <property type="project" value="InterPro"/>
</dbReference>
<dbReference type="GO" id="GO:0006782">
    <property type="term" value="P:protoporphyrinogen IX biosynthetic process"/>
    <property type="evidence" value="ECO:0007669"/>
    <property type="project" value="UniProtKB-UniRule"/>
</dbReference>
<dbReference type="CDD" id="cd05213">
    <property type="entry name" value="NAD_bind_Glutamyl_tRNA_reduct"/>
    <property type="match status" value="1"/>
</dbReference>
<dbReference type="FunFam" id="3.30.460.30:FF:000001">
    <property type="entry name" value="Glutamyl-tRNA reductase"/>
    <property type="match status" value="1"/>
</dbReference>
<dbReference type="FunFam" id="3.40.50.720:FF:000031">
    <property type="entry name" value="Glutamyl-tRNA reductase"/>
    <property type="match status" value="1"/>
</dbReference>
<dbReference type="Gene3D" id="3.30.460.30">
    <property type="entry name" value="Glutamyl-tRNA reductase, N-terminal domain"/>
    <property type="match status" value="1"/>
</dbReference>
<dbReference type="Gene3D" id="3.40.50.720">
    <property type="entry name" value="NAD(P)-binding Rossmann-like Domain"/>
    <property type="match status" value="1"/>
</dbReference>
<dbReference type="HAMAP" id="MF_00087">
    <property type="entry name" value="Glu_tRNA_reductase"/>
    <property type="match status" value="1"/>
</dbReference>
<dbReference type="InterPro" id="IPR000343">
    <property type="entry name" value="4pyrrol_synth_GluRdtase"/>
</dbReference>
<dbReference type="InterPro" id="IPR015896">
    <property type="entry name" value="4pyrrol_synth_GluRdtase_dimer"/>
</dbReference>
<dbReference type="InterPro" id="IPR015895">
    <property type="entry name" value="4pyrrol_synth_GluRdtase_N"/>
</dbReference>
<dbReference type="InterPro" id="IPR018214">
    <property type="entry name" value="GluRdtase_CS"/>
</dbReference>
<dbReference type="InterPro" id="IPR036453">
    <property type="entry name" value="GluRdtase_dimer_dom_sf"/>
</dbReference>
<dbReference type="InterPro" id="IPR036343">
    <property type="entry name" value="GluRdtase_N_sf"/>
</dbReference>
<dbReference type="InterPro" id="IPR036291">
    <property type="entry name" value="NAD(P)-bd_dom_sf"/>
</dbReference>
<dbReference type="InterPro" id="IPR006151">
    <property type="entry name" value="Shikm_DH/Glu-tRNA_Rdtase"/>
</dbReference>
<dbReference type="NCBIfam" id="TIGR01035">
    <property type="entry name" value="hemA"/>
    <property type="match status" value="1"/>
</dbReference>
<dbReference type="PANTHER" id="PTHR43120">
    <property type="entry name" value="GLUTAMYL-TRNA REDUCTASE 1, CHLOROPLASTIC"/>
    <property type="match status" value="1"/>
</dbReference>
<dbReference type="PANTHER" id="PTHR43120:SF1">
    <property type="entry name" value="GLUTAMYL-TRNA REDUCTASE 1, CHLOROPLASTIC"/>
    <property type="match status" value="1"/>
</dbReference>
<dbReference type="Pfam" id="PF00745">
    <property type="entry name" value="GlutR_dimer"/>
    <property type="match status" value="1"/>
</dbReference>
<dbReference type="Pfam" id="PF05201">
    <property type="entry name" value="GlutR_N"/>
    <property type="match status" value="1"/>
</dbReference>
<dbReference type="Pfam" id="PF01488">
    <property type="entry name" value="Shikimate_DH"/>
    <property type="match status" value="1"/>
</dbReference>
<dbReference type="PIRSF" id="PIRSF000445">
    <property type="entry name" value="4pyrrol_synth_GluRdtase"/>
    <property type="match status" value="1"/>
</dbReference>
<dbReference type="SUPFAM" id="SSF69742">
    <property type="entry name" value="Glutamyl tRNA-reductase catalytic, N-terminal domain"/>
    <property type="match status" value="1"/>
</dbReference>
<dbReference type="SUPFAM" id="SSF69075">
    <property type="entry name" value="Glutamyl tRNA-reductase dimerization domain"/>
    <property type="match status" value="1"/>
</dbReference>
<dbReference type="SUPFAM" id="SSF51735">
    <property type="entry name" value="NAD(P)-binding Rossmann-fold domains"/>
    <property type="match status" value="1"/>
</dbReference>
<dbReference type="PROSITE" id="PS00747">
    <property type="entry name" value="GLUTR"/>
    <property type="match status" value="1"/>
</dbReference>
<reference key="1">
    <citation type="journal article" date="2004" name="Nucleic Acids Res.">
        <title>Whole genome comparisons of serotype 4b and 1/2a strains of the food-borne pathogen Listeria monocytogenes reveal new insights into the core genome components of this species.</title>
        <authorList>
            <person name="Nelson K.E."/>
            <person name="Fouts D.E."/>
            <person name="Mongodin E.F."/>
            <person name="Ravel J."/>
            <person name="DeBoy R.T."/>
            <person name="Kolonay J.F."/>
            <person name="Rasko D.A."/>
            <person name="Angiuoli S.V."/>
            <person name="Gill S.R."/>
            <person name="Paulsen I.T."/>
            <person name="Peterson J.D."/>
            <person name="White O."/>
            <person name="Nelson W.C."/>
            <person name="Nierman W.C."/>
            <person name="Beanan M.J."/>
            <person name="Brinkac L.M."/>
            <person name="Daugherty S.C."/>
            <person name="Dodson R.J."/>
            <person name="Durkin A.S."/>
            <person name="Madupu R."/>
            <person name="Haft D.H."/>
            <person name="Selengut J."/>
            <person name="Van Aken S.E."/>
            <person name="Khouri H.M."/>
            <person name="Fedorova N."/>
            <person name="Forberger H.A."/>
            <person name="Tran B."/>
            <person name="Kathariou S."/>
            <person name="Wonderling L.D."/>
            <person name="Uhlich G.A."/>
            <person name="Bayles D.O."/>
            <person name="Luchansky J.B."/>
            <person name="Fraser C.M."/>
        </authorList>
    </citation>
    <scope>NUCLEOTIDE SEQUENCE [LARGE SCALE GENOMIC DNA]</scope>
    <source>
        <strain>F2365</strain>
    </source>
</reference>
<gene>
    <name evidence="1" type="primary">hemA</name>
    <name type="ordered locus">LMOf2365_1578</name>
</gene>
<protein>
    <recommendedName>
        <fullName evidence="1">Glutamyl-tRNA reductase</fullName>
        <shortName evidence="1">GluTR</shortName>
        <ecNumber evidence="1">1.2.1.70</ecNumber>
    </recommendedName>
</protein>
<name>HEM1_LISMF</name>
<comment type="function">
    <text evidence="1">Catalyzes the NADPH-dependent reduction of glutamyl-tRNA(Glu) to glutamate 1-semialdehyde (GSA).</text>
</comment>
<comment type="catalytic activity">
    <reaction evidence="1">
        <text>(S)-4-amino-5-oxopentanoate + tRNA(Glu) + NADP(+) = L-glutamyl-tRNA(Glu) + NADPH + H(+)</text>
        <dbReference type="Rhea" id="RHEA:12344"/>
        <dbReference type="Rhea" id="RHEA-COMP:9663"/>
        <dbReference type="Rhea" id="RHEA-COMP:9680"/>
        <dbReference type="ChEBI" id="CHEBI:15378"/>
        <dbReference type="ChEBI" id="CHEBI:57501"/>
        <dbReference type="ChEBI" id="CHEBI:57783"/>
        <dbReference type="ChEBI" id="CHEBI:58349"/>
        <dbReference type="ChEBI" id="CHEBI:78442"/>
        <dbReference type="ChEBI" id="CHEBI:78520"/>
        <dbReference type="EC" id="1.2.1.70"/>
    </reaction>
</comment>
<comment type="pathway">
    <text evidence="1">Porphyrin-containing compound metabolism; protoporphyrin-IX biosynthesis; 5-aminolevulinate from L-glutamyl-tRNA(Glu): step 1/2.</text>
</comment>
<comment type="subunit">
    <text evidence="1">Homodimer.</text>
</comment>
<comment type="domain">
    <text evidence="1">Possesses an unusual extended V-shaped dimeric structure with each monomer consisting of three distinct domains arranged along a curved 'spinal' alpha-helix. The N-terminal catalytic domain specifically recognizes the glutamate moiety of the substrate. The second domain is the NADPH-binding domain, and the third C-terminal domain is responsible for dimerization.</text>
</comment>
<comment type="miscellaneous">
    <text evidence="1">During catalysis, the active site Cys acts as a nucleophile attacking the alpha-carbonyl group of tRNA-bound glutamate with the formation of a thioester intermediate between enzyme and glutamate, and the concomitant release of tRNA(Glu). The thioester intermediate is finally reduced by direct hydride transfer from NADPH, to form the product GSA.</text>
</comment>
<comment type="similarity">
    <text evidence="1">Belongs to the glutamyl-tRNA reductase family.</text>
</comment>
<accession>Q71ZB1</accession>
<proteinExistence type="inferred from homology"/>
<organism>
    <name type="scientific">Listeria monocytogenes serotype 4b (strain F2365)</name>
    <dbReference type="NCBI Taxonomy" id="265669"/>
    <lineage>
        <taxon>Bacteria</taxon>
        <taxon>Bacillati</taxon>
        <taxon>Bacillota</taxon>
        <taxon>Bacilli</taxon>
        <taxon>Bacillales</taxon>
        <taxon>Listeriaceae</taxon>
        <taxon>Listeria</taxon>
    </lineage>
</organism>
<feature type="chain" id="PRO_0000114036" description="Glutamyl-tRNA reductase">
    <location>
        <begin position="1"/>
        <end position="435"/>
    </location>
</feature>
<feature type="active site" description="Nucleophile" evidence="1">
    <location>
        <position position="50"/>
    </location>
</feature>
<feature type="binding site" evidence="1">
    <location>
        <begin position="49"/>
        <end position="52"/>
    </location>
    <ligand>
        <name>substrate</name>
    </ligand>
</feature>
<feature type="binding site" evidence="1">
    <location>
        <position position="109"/>
    </location>
    <ligand>
        <name>substrate</name>
    </ligand>
</feature>
<feature type="binding site" evidence="1">
    <location>
        <begin position="114"/>
        <end position="116"/>
    </location>
    <ligand>
        <name>substrate</name>
    </ligand>
</feature>
<feature type="binding site" evidence="1">
    <location>
        <position position="120"/>
    </location>
    <ligand>
        <name>substrate</name>
    </ligand>
</feature>
<feature type="binding site" evidence="1">
    <location>
        <begin position="189"/>
        <end position="194"/>
    </location>
    <ligand>
        <name>NADP(+)</name>
        <dbReference type="ChEBI" id="CHEBI:58349"/>
    </ligand>
</feature>
<feature type="site" description="Important for activity" evidence="1">
    <location>
        <position position="99"/>
    </location>
</feature>
<keyword id="KW-0521">NADP</keyword>
<keyword id="KW-0560">Oxidoreductase</keyword>
<keyword id="KW-0627">Porphyrin biosynthesis</keyword>
<evidence type="ECO:0000255" key="1">
    <source>
        <dbReference type="HAMAP-Rule" id="MF_00087"/>
    </source>
</evidence>
<sequence>MFILTMGLNHHTAPIDIREKLVFKESEEEMALVTLQQEKSILENVIISTCNRTEIVAVVDQIHTGRYYLKRFMANWFQMDMEKIEPYLFFHEETDAVNHLYKVTAGLDSLVLGETQILGQVKHAFEIAKQTATTGTLLNKLFREVVTFAKKVHHHTKINENAVSVSYAAVEVAKKLYGSLDNKKIVLVGAGEMSELALQNLAGSGIADITIINRTKSNAELLANQFQAKVGAYENMNEHLMLADIVLVSTSAAEPIIKQAAMQDLMEQKASSMLVIDIGLPRNVEHDCSYIPNFHLYDIDDLAGVVSANSLERQRIVLELENTIEAEVRNFFEWEKQLGVVPVIRALREKALDMQEVTMTSLENKLPGLTEREYIQIGKHMKSIINQMLKQPISELKEMSVEEDATTSIEHFKRIFGLSETDVTVIEKEQAETRS</sequence>